<keyword id="KW-0067">ATP-binding</keyword>
<keyword id="KW-0143">Chaperone</keyword>
<keyword id="KW-0963">Cytoplasm</keyword>
<keyword id="KW-0547">Nucleotide-binding</keyword>
<gene>
    <name evidence="1" type="primary">hslU</name>
    <name type="ordered locus">HPSH_04345</name>
</gene>
<evidence type="ECO:0000255" key="1">
    <source>
        <dbReference type="HAMAP-Rule" id="MF_00249"/>
    </source>
</evidence>
<organism>
    <name type="scientific">Helicobacter pylori (strain Shi470)</name>
    <dbReference type="NCBI Taxonomy" id="512562"/>
    <lineage>
        <taxon>Bacteria</taxon>
        <taxon>Pseudomonadati</taxon>
        <taxon>Campylobacterota</taxon>
        <taxon>Epsilonproteobacteria</taxon>
        <taxon>Campylobacterales</taxon>
        <taxon>Helicobacteraceae</taxon>
        <taxon>Helicobacter</taxon>
    </lineage>
</organism>
<accession>B2UTX2</accession>
<comment type="function">
    <text evidence="1">ATPase subunit of a proteasome-like degradation complex; this subunit has chaperone activity. The binding of ATP and its subsequent hydrolysis by HslU are essential for unfolding of protein substrates subsequently hydrolyzed by HslV. HslU recognizes the N-terminal part of its protein substrates and unfolds these before they are guided to HslV for hydrolysis.</text>
</comment>
<comment type="subunit">
    <text evidence="1">A double ring-shaped homohexamer of HslV is capped on each side by a ring-shaped HslU homohexamer. The assembly of the HslU/HslV complex is dependent on binding of ATP.</text>
</comment>
<comment type="subcellular location">
    <subcellularLocation>
        <location evidence="1">Cytoplasm</location>
    </subcellularLocation>
</comment>
<comment type="similarity">
    <text evidence="1">Belongs to the ClpX chaperone family. HslU subfamily.</text>
</comment>
<sequence length="443" mass="50102">MSELNMTPREIVAYLDEYIIGQKEAKKSIAIAFRNRYRRLQLEKSLQEEITPKNILMIGSTGVGKTEIARRIAKIMKLPFVKVEASKYTEVGFVGRDVESMVRDLVNNSVLLVENEHKEKLKDKIEEAVIEKIAKKLLPPLPNGVSEEKKQEYANSLLKMQQRIVQGELDSREIEIEVRKKSIEIDSNVPPEILRVQENVIKFFHKEQDKVKKTLSVKEAKEALKAEISDTLLDGEAIKMEGLKRAESSGVIFIDEIDKIAVSSKEGGRQDPSKEGVQRDLLPIVEGSVVNTKYGPIKTEHILFIAAGAFHLSKPSDLIPELQGRFPLRVELESLTEEIMYMILTQTKTSIIKQYQALLKVEGVGIAFEDNAIKELAKLSYNANQKSEDIGARRLHTTIEKVLEDISFEAENYSGQNVTITKELVQSKLEDLVADENLVKYIL</sequence>
<proteinExistence type="inferred from homology"/>
<reference key="1">
    <citation type="submission" date="2008-05" db="EMBL/GenBank/DDBJ databases">
        <title>Genome sequence of Helicobacter pylori from the remote Amazon: traces of Asian ancestry of the first Americans.</title>
        <authorList>
            <person name="Kersulyte D."/>
            <person name="Kalia A."/>
            <person name="Gilman R.H."/>
            <person name="Berg D.E."/>
        </authorList>
    </citation>
    <scope>NUCLEOTIDE SEQUENCE [LARGE SCALE GENOMIC DNA]</scope>
    <source>
        <strain>Shi470</strain>
    </source>
</reference>
<dbReference type="EMBL" id="CP001072">
    <property type="protein sequence ID" value="ACD48304.1"/>
    <property type="molecule type" value="Genomic_DNA"/>
</dbReference>
<dbReference type="RefSeq" id="WP_001292871.1">
    <property type="nucleotide sequence ID" value="NC_010698.2"/>
</dbReference>
<dbReference type="SMR" id="B2UTX2"/>
<dbReference type="KEGG" id="hps:HPSH_04345"/>
<dbReference type="HOGENOM" id="CLU_033123_0_0_7"/>
<dbReference type="GO" id="GO:0009376">
    <property type="term" value="C:HslUV protease complex"/>
    <property type="evidence" value="ECO:0007669"/>
    <property type="project" value="UniProtKB-UniRule"/>
</dbReference>
<dbReference type="GO" id="GO:0005524">
    <property type="term" value="F:ATP binding"/>
    <property type="evidence" value="ECO:0007669"/>
    <property type="project" value="UniProtKB-UniRule"/>
</dbReference>
<dbReference type="GO" id="GO:0016887">
    <property type="term" value="F:ATP hydrolysis activity"/>
    <property type="evidence" value="ECO:0007669"/>
    <property type="project" value="InterPro"/>
</dbReference>
<dbReference type="GO" id="GO:0008233">
    <property type="term" value="F:peptidase activity"/>
    <property type="evidence" value="ECO:0007669"/>
    <property type="project" value="InterPro"/>
</dbReference>
<dbReference type="GO" id="GO:0036402">
    <property type="term" value="F:proteasome-activating activity"/>
    <property type="evidence" value="ECO:0007669"/>
    <property type="project" value="UniProtKB-UniRule"/>
</dbReference>
<dbReference type="GO" id="GO:0043335">
    <property type="term" value="P:protein unfolding"/>
    <property type="evidence" value="ECO:0007669"/>
    <property type="project" value="UniProtKB-UniRule"/>
</dbReference>
<dbReference type="GO" id="GO:0051603">
    <property type="term" value="P:proteolysis involved in protein catabolic process"/>
    <property type="evidence" value="ECO:0007669"/>
    <property type="project" value="TreeGrafter"/>
</dbReference>
<dbReference type="CDD" id="cd19498">
    <property type="entry name" value="RecA-like_HslU"/>
    <property type="match status" value="1"/>
</dbReference>
<dbReference type="Gene3D" id="1.10.8.60">
    <property type="match status" value="1"/>
</dbReference>
<dbReference type="Gene3D" id="3.40.50.300">
    <property type="entry name" value="P-loop containing nucleotide triphosphate hydrolases"/>
    <property type="match status" value="2"/>
</dbReference>
<dbReference type="HAMAP" id="MF_00249">
    <property type="entry name" value="HslU"/>
    <property type="match status" value="1"/>
</dbReference>
<dbReference type="InterPro" id="IPR003593">
    <property type="entry name" value="AAA+_ATPase"/>
</dbReference>
<dbReference type="InterPro" id="IPR050052">
    <property type="entry name" value="ATP-dep_Clp_protease_ClpX"/>
</dbReference>
<dbReference type="InterPro" id="IPR003959">
    <property type="entry name" value="ATPase_AAA_core"/>
</dbReference>
<dbReference type="InterPro" id="IPR019489">
    <property type="entry name" value="Clp_ATPase_C"/>
</dbReference>
<dbReference type="InterPro" id="IPR004491">
    <property type="entry name" value="HslU"/>
</dbReference>
<dbReference type="InterPro" id="IPR027417">
    <property type="entry name" value="P-loop_NTPase"/>
</dbReference>
<dbReference type="NCBIfam" id="TIGR00390">
    <property type="entry name" value="hslU"/>
    <property type="match status" value="1"/>
</dbReference>
<dbReference type="NCBIfam" id="NF003544">
    <property type="entry name" value="PRK05201.1"/>
    <property type="match status" value="1"/>
</dbReference>
<dbReference type="PANTHER" id="PTHR48102">
    <property type="entry name" value="ATP-DEPENDENT CLP PROTEASE ATP-BINDING SUBUNIT CLPX-LIKE, MITOCHONDRIAL-RELATED"/>
    <property type="match status" value="1"/>
</dbReference>
<dbReference type="PANTHER" id="PTHR48102:SF3">
    <property type="entry name" value="ATP-DEPENDENT PROTEASE ATPASE SUBUNIT HSLU"/>
    <property type="match status" value="1"/>
</dbReference>
<dbReference type="Pfam" id="PF00004">
    <property type="entry name" value="AAA"/>
    <property type="match status" value="1"/>
</dbReference>
<dbReference type="Pfam" id="PF07724">
    <property type="entry name" value="AAA_2"/>
    <property type="match status" value="1"/>
</dbReference>
<dbReference type="SMART" id="SM00382">
    <property type="entry name" value="AAA"/>
    <property type="match status" value="1"/>
</dbReference>
<dbReference type="SMART" id="SM01086">
    <property type="entry name" value="ClpB_D2-small"/>
    <property type="match status" value="1"/>
</dbReference>
<dbReference type="SUPFAM" id="SSF52540">
    <property type="entry name" value="P-loop containing nucleoside triphosphate hydrolases"/>
    <property type="match status" value="1"/>
</dbReference>
<name>HSLU_HELPS</name>
<feature type="chain" id="PRO_1000100953" description="ATP-dependent protease ATPase subunit HslU">
    <location>
        <begin position="1"/>
        <end position="443"/>
    </location>
</feature>
<feature type="binding site" evidence="1">
    <location>
        <position position="20"/>
    </location>
    <ligand>
        <name>ATP</name>
        <dbReference type="ChEBI" id="CHEBI:30616"/>
    </ligand>
</feature>
<feature type="binding site" evidence="1">
    <location>
        <begin position="62"/>
        <end position="67"/>
    </location>
    <ligand>
        <name>ATP</name>
        <dbReference type="ChEBI" id="CHEBI:30616"/>
    </ligand>
</feature>
<feature type="binding site" evidence="1">
    <location>
        <position position="255"/>
    </location>
    <ligand>
        <name>ATP</name>
        <dbReference type="ChEBI" id="CHEBI:30616"/>
    </ligand>
</feature>
<feature type="binding site" evidence="1">
    <location>
        <position position="321"/>
    </location>
    <ligand>
        <name>ATP</name>
        <dbReference type="ChEBI" id="CHEBI:30616"/>
    </ligand>
</feature>
<feature type="binding site" evidence="1">
    <location>
        <position position="393"/>
    </location>
    <ligand>
        <name>ATP</name>
        <dbReference type="ChEBI" id="CHEBI:30616"/>
    </ligand>
</feature>
<protein>
    <recommendedName>
        <fullName evidence="1">ATP-dependent protease ATPase subunit HslU</fullName>
    </recommendedName>
    <alternativeName>
        <fullName evidence="1">Unfoldase HslU</fullName>
    </alternativeName>
</protein>